<keyword id="KW-0963">Cytoplasm</keyword>
<keyword id="KW-0328">Glycosyltransferase</keyword>
<keyword id="KW-0660">Purine salvage</keyword>
<keyword id="KW-0808">Transferase</keyword>
<name>APT_BRUA1</name>
<feature type="chain" id="PRO_1000088955" description="Adenine phosphoribosyltransferase">
    <location>
        <begin position="1"/>
        <end position="181"/>
    </location>
</feature>
<comment type="function">
    <text evidence="1">Catalyzes a salvage reaction resulting in the formation of AMP, that is energically less costly than de novo synthesis.</text>
</comment>
<comment type="catalytic activity">
    <reaction evidence="1">
        <text>AMP + diphosphate = 5-phospho-alpha-D-ribose 1-diphosphate + adenine</text>
        <dbReference type="Rhea" id="RHEA:16609"/>
        <dbReference type="ChEBI" id="CHEBI:16708"/>
        <dbReference type="ChEBI" id="CHEBI:33019"/>
        <dbReference type="ChEBI" id="CHEBI:58017"/>
        <dbReference type="ChEBI" id="CHEBI:456215"/>
        <dbReference type="EC" id="2.4.2.7"/>
    </reaction>
</comment>
<comment type="pathway">
    <text evidence="1">Purine metabolism; AMP biosynthesis via salvage pathway; AMP from adenine: step 1/1.</text>
</comment>
<comment type="subunit">
    <text evidence="1">Homodimer.</text>
</comment>
<comment type="subcellular location">
    <subcellularLocation>
        <location evidence="1">Cytoplasm</location>
    </subcellularLocation>
</comment>
<comment type="similarity">
    <text evidence="1">Belongs to the purine/pyrimidine phosphoribosyltransferase family.</text>
</comment>
<organism>
    <name type="scientific">Brucella abortus (strain S19)</name>
    <dbReference type="NCBI Taxonomy" id="430066"/>
    <lineage>
        <taxon>Bacteria</taxon>
        <taxon>Pseudomonadati</taxon>
        <taxon>Pseudomonadota</taxon>
        <taxon>Alphaproteobacteria</taxon>
        <taxon>Hyphomicrobiales</taxon>
        <taxon>Brucellaceae</taxon>
        <taxon>Brucella/Ochrobactrum group</taxon>
        <taxon>Brucella</taxon>
    </lineage>
</organism>
<sequence>MESGFKVTLKDAIRTIPDYPKPGVQFRDVTTLMGNAQAFRRAVDELVYPYAGNRIDKVAGIEARGFILGGAIAHQLSAGFVPIRKKGKLPRDTVRIAYSLEYGVDEMEMHRDAIEKGERVVLVDDLIATGGTAEAAAKLLLQMGAEIVAACFIIDLPDLGGRKKLEALGLPVRTLVAFEGD</sequence>
<gene>
    <name evidence="1" type="primary">apt</name>
    <name type="ordered locus">BAbS19_I14550</name>
</gene>
<accession>B2S701</accession>
<proteinExistence type="inferred from homology"/>
<reference key="1">
    <citation type="journal article" date="2008" name="PLoS ONE">
        <title>Genome sequence of Brucella abortus vaccine strain S19 compared to virulent strains yields candidate virulence genes.</title>
        <authorList>
            <person name="Crasta O.R."/>
            <person name="Folkerts O."/>
            <person name="Fei Z."/>
            <person name="Mane S.P."/>
            <person name="Evans C."/>
            <person name="Martino-Catt S."/>
            <person name="Bricker B."/>
            <person name="Yu G."/>
            <person name="Du L."/>
            <person name="Sobral B.W."/>
        </authorList>
    </citation>
    <scope>NUCLEOTIDE SEQUENCE [LARGE SCALE GENOMIC DNA]</scope>
    <source>
        <strain>S19</strain>
    </source>
</reference>
<protein>
    <recommendedName>
        <fullName evidence="1">Adenine phosphoribosyltransferase</fullName>
        <shortName evidence="1">APRT</shortName>
        <ecNumber evidence="1">2.4.2.7</ecNumber>
    </recommendedName>
</protein>
<evidence type="ECO:0000255" key="1">
    <source>
        <dbReference type="HAMAP-Rule" id="MF_00004"/>
    </source>
</evidence>
<dbReference type="EC" id="2.4.2.7" evidence="1"/>
<dbReference type="EMBL" id="CP000887">
    <property type="protein sequence ID" value="ACD72948.1"/>
    <property type="molecule type" value="Genomic_DNA"/>
</dbReference>
<dbReference type="RefSeq" id="WP_002964645.1">
    <property type="nucleotide sequence ID" value="NC_010742.1"/>
</dbReference>
<dbReference type="SMR" id="B2S701"/>
<dbReference type="KEGG" id="bmc:BAbS19_I14550"/>
<dbReference type="HOGENOM" id="CLU_063339_3_0_5"/>
<dbReference type="UniPathway" id="UPA00588">
    <property type="reaction ID" value="UER00646"/>
</dbReference>
<dbReference type="Proteomes" id="UP000002565">
    <property type="component" value="Chromosome 1"/>
</dbReference>
<dbReference type="GO" id="GO:0005737">
    <property type="term" value="C:cytoplasm"/>
    <property type="evidence" value="ECO:0007669"/>
    <property type="project" value="UniProtKB-SubCell"/>
</dbReference>
<dbReference type="GO" id="GO:0002055">
    <property type="term" value="F:adenine binding"/>
    <property type="evidence" value="ECO:0007669"/>
    <property type="project" value="TreeGrafter"/>
</dbReference>
<dbReference type="GO" id="GO:0003999">
    <property type="term" value="F:adenine phosphoribosyltransferase activity"/>
    <property type="evidence" value="ECO:0007669"/>
    <property type="project" value="UniProtKB-UniRule"/>
</dbReference>
<dbReference type="GO" id="GO:0016208">
    <property type="term" value="F:AMP binding"/>
    <property type="evidence" value="ECO:0007669"/>
    <property type="project" value="TreeGrafter"/>
</dbReference>
<dbReference type="GO" id="GO:0006168">
    <property type="term" value="P:adenine salvage"/>
    <property type="evidence" value="ECO:0007669"/>
    <property type="project" value="InterPro"/>
</dbReference>
<dbReference type="GO" id="GO:0044209">
    <property type="term" value="P:AMP salvage"/>
    <property type="evidence" value="ECO:0007669"/>
    <property type="project" value="UniProtKB-UniRule"/>
</dbReference>
<dbReference type="GO" id="GO:0006166">
    <property type="term" value="P:purine ribonucleoside salvage"/>
    <property type="evidence" value="ECO:0007669"/>
    <property type="project" value="UniProtKB-KW"/>
</dbReference>
<dbReference type="CDD" id="cd06223">
    <property type="entry name" value="PRTases_typeI"/>
    <property type="match status" value="1"/>
</dbReference>
<dbReference type="FunFam" id="3.40.50.2020:FF:000021">
    <property type="entry name" value="Adenine phosphoribosyltransferase"/>
    <property type="match status" value="1"/>
</dbReference>
<dbReference type="Gene3D" id="3.40.50.2020">
    <property type="match status" value="1"/>
</dbReference>
<dbReference type="HAMAP" id="MF_00004">
    <property type="entry name" value="Aden_phosphoribosyltr"/>
    <property type="match status" value="1"/>
</dbReference>
<dbReference type="InterPro" id="IPR005764">
    <property type="entry name" value="Ade_phspho_trans"/>
</dbReference>
<dbReference type="InterPro" id="IPR000836">
    <property type="entry name" value="PRibTrfase_dom"/>
</dbReference>
<dbReference type="InterPro" id="IPR029057">
    <property type="entry name" value="PRTase-like"/>
</dbReference>
<dbReference type="InterPro" id="IPR050054">
    <property type="entry name" value="UPRTase/APRTase"/>
</dbReference>
<dbReference type="NCBIfam" id="TIGR01090">
    <property type="entry name" value="apt"/>
    <property type="match status" value="1"/>
</dbReference>
<dbReference type="NCBIfam" id="NF002634">
    <property type="entry name" value="PRK02304.1-3"/>
    <property type="match status" value="1"/>
</dbReference>
<dbReference type="NCBIfam" id="NF002636">
    <property type="entry name" value="PRK02304.1-5"/>
    <property type="match status" value="1"/>
</dbReference>
<dbReference type="PANTHER" id="PTHR32315">
    <property type="entry name" value="ADENINE PHOSPHORIBOSYLTRANSFERASE"/>
    <property type="match status" value="1"/>
</dbReference>
<dbReference type="PANTHER" id="PTHR32315:SF3">
    <property type="entry name" value="ADENINE PHOSPHORIBOSYLTRANSFERASE"/>
    <property type="match status" value="1"/>
</dbReference>
<dbReference type="Pfam" id="PF00156">
    <property type="entry name" value="Pribosyltran"/>
    <property type="match status" value="1"/>
</dbReference>
<dbReference type="SUPFAM" id="SSF53271">
    <property type="entry name" value="PRTase-like"/>
    <property type="match status" value="1"/>
</dbReference>
<dbReference type="PROSITE" id="PS00103">
    <property type="entry name" value="PUR_PYR_PR_TRANSFER"/>
    <property type="match status" value="1"/>
</dbReference>